<comment type="function">
    <text evidence="1">Atypical E2F transcription factor that participates in various processes such as angiogenesis and polyploidization of specialized cells. Mainly acts as a transcription repressor that binds DNA independently of DP proteins and specifically recognizes the E2 recognition site 5'-TTTC[CG]CGC-3'. Directly represses transcription of classical E2F transcription factors such as e2f1. Acts as a regulator of S-phase by recognizing and binding the E2-related site 5'-TTCCCGCC-3' and mediating repression of G1/S-regulated genes. Acts as a promoter of sprouting angiogenesis, possibly by acting as a transcription activator (By similarity).</text>
</comment>
<comment type="subunit">
    <text evidence="1">Homodimer and heterodimer: mainly forms homodimers and, to a lesser extent, heterodimers with e2f8.</text>
</comment>
<comment type="subcellular location">
    <subcellularLocation>
        <location evidence="1">Nucleus</location>
    </subcellularLocation>
</comment>
<comment type="domain">
    <text evidence="1">In contrast to classical members of the E2F transcription factor, atypical members contain 2 DNA-binding domains and regulate transcription in a DP-independent manner. Both DNA-binding domains are required for DNA-binding and are proposed to form an intramolecular structure that is similar to the winged helix structure of the E2F-DP heterodimer (By similarity).</text>
</comment>
<comment type="similarity">
    <text evidence="4">Belongs to the E2F/DP family.</text>
</comment>
<evidence type="ECO:0000250" key="1"/>
<evidence type="ECO:0000255" key="2"/>
<evidence type="ECO:0000256" key="3">
    <source>
        <dbReference type="SAM" id="MobiDB-lite"/>
    </source>
</evidence>
<evidence type="ECO:0000305" key="4"/>
<sequence length="862" mass="95487">MEVTSCLTLKDLISTKKNKSDPVADGRSAQKENMFDRFKISPRLPLRSEPIDLSKQKSFTPERIPVTPVKVAERPQADPWTPTANLKMLISAASPEIRDREKKKELFRPIENNGIEETDTDLQLMDSVDDIDDLEKRPSRKQKSLGLLCQKFLARYPSYPISTEKMTISLDEAASSLGVERRRIYDIVNVLESLHLVSRVAKNQYCWHGQHNLNETLRNLQHIGEKQNYRAQIACFNLRDMGMEYKCDEQEKGCHIDHLNTPLIELSEADCPSVSSSSRKDKSLRIMSQKFVMLFLVSTTKIITLEIAAKILIEESQDAADHSKFKTKVRRLYDIANVLTSLGLIKKVHVTDERGRKPAFKWIGPVDFTAEDQKMEVTTTIPSPDSKKDACNLSPASDRVKQRLFRHSSFNIVQSFSAVKRKVCSHPCSPQKPQGVESSDSYASKMAHLATICKPKAEEDSKNGNIENSSLPFSVVVPMPVDSDYRVKPVVHQVPLVSHKTVCEPLGIMPPSQSNEDCTNHGFVPNQPYMYLPSNSVFMLCGNLSEGKATDHLAMSLYPVPGSDSPTLEETTMSKQERPTKRQLNDKDDAPLSLVLPKKSRVDNTQSLQKPICKTTTPEQLQHVSREEEYNTEPVTKHSNVGETTEEVGSRILPHENVHLHPAVPPQFLYVPTTQGLNSFNFLLPANHSAGLSQSQLASLNVPYVMVPSSALTAFPFICSPAVSSGASGSTLNGRMNFSQAGTSSPTRLIIGAPQMAVPQPPEPAVDQTKNLSPLSVSPVSAKCASSKADSHDSLSQSIHTAKLHKSPTPSTPKSIRPLHKDAFFKTPGSLDVSSSRKPQRTQTRTSSSAQRKLDIDSSAGN</sequence>
<organism>
    <name type="scientific">Xenopus tropicalis</name>
    <name type="common">Western clawed frog</name>
    <name type="synonym">Silurana tropicalis</name>
    <dbReference type="NCBI Taxonomy" id="8364"/>
    <lineage>
        <taxon>Eukaryota</taxon>
        <taxon>Metazoa</taxon>
        <taxon>Chordata</taxon>
        <taxon>Craniata</taxon>
        <taxon>Vertebrata</taxon>
        <taxon>Euteleostomi</taxon>
        <taxon>Amphibia</taxon>
        <taxon>Batrachia</taxon>
        <taxon>Anura</taxon>
        <taxon>Pipoidea</taxon>
        <taxon>Pipidae</taxon>
        <taxon>Xenopodinae</taxon>
        <taxon>Xenopus</taxon>
        <taxon>Silurana</taxon>
    </lineage>
</organism>
<gene>
    <name type="primary">e2f7</name>
</gene>
<keyword id="KW-0010">Activator</keyword>
<keyword id="KW-0131">Cell cycle</keyword>
<keyword id="KW-0238">DNA-binding</keyword>
<keyword id="KW-0539">Nucleus</keyword>
<keyword id="KW-1185">Reference proteome</keyword>
<keyword id="KW-0678">Repressor</keyword>
<keyword id="KW-0804">Transcription</keyword>
<keyword id="KW-0805">Transcription regulation</keyword>
<dbReference type="EMBL" id="AAMC01048174">
    <property type="status" value="NOT_ANNOTATED_CDS"/>
    <property type="molecule type" value="Genomic_DNA"/>
</dbReference>
<dbReference type="EMBL" id="AAMC01048175">
    <property type="status" value="NOT_ANNOTATED_CDS"/>
    <property type="molecule type" value="Genomic_DNA"/>
</dbReference>
<dbReference type="EMBL" id="AAMC01048176">
    <property type="status" value="NOT_ANNOTATED_CDS"/>
    <property type="molecule type" value="Genomic_DNA"/>
</dbReference>
<dbReference type="SMR" id="F6YVB9"/>
<dbReference type="FunCoup" id="F6YVB9">
    <property type="interactions" value="1696"/>
</dbReference>
<dbReference type="STRING" id="8364.ENSXETP00000022296"/>
<dbReference type="PaxDb" id="8364-ENSXETP00000031323"/>
<dbReference type="eggNOG" id="KOG2578">
    <property type="taxonomic scope" value="Eukaryota"/>
</dbReference>
<dbReference type="HOGENOM" id="CLU_014845_1_0_1"/>
<dbReference type="InParanoid" id="F6YVB9"/>
<dbReference type="TreeFam" id="TF105567"/>
<dbReference type="Proteomes" id="UP000008143">
    <property type="component" value="Unplaced"/>
</dbReference>
<dbReference type="GO" id="GO:0005634">
    <property type="term" value="C:nucleus"/>
    <property type="evidence" value="ECO:0007669"/>
    <property type="project" value="UniProtKB-SubCell"/>
</dbReference>
<dbReference type="GO" id="GO:0005667">
    <property type="term" value="C:transcription regulator complex"/>
    <property type="evidence" value="ECO:0007669"/>
    <property type="project" value="InterPro"/>
</dbReference>
<dbReference type="GO" id="GO:0003700">
    <property type="term" value="F:DNA-binding transcription factor activity"/>
    <property type="evidence" value="ECO:0000250"/>
    <property type="project" value="UniProtKB"/>
</dbReference>
<dbReference type="GO" id="GO:0001217">
    <property type="term" value="F:DNA-binding transcription repressor activity"/>
    <property type="evidence" value="ECO:0000250"/>
    <property type="project" value="UniProtKB"/>
</dbReference>
<dbReference type="GO" id="GO:0000978">
    <property type="term" value="F:RNA polymerase II cis-regulatory region sequence-specific DNA binding"/>
    <property type="evidence" value="ECO:0000250"/>
    <property type="project" value="UniProtKB"/>
</dbReference>
<dbReference type="GO" id="GO:0060718">
    <property type="term" value="P:chorionic trophoblast cell differentiation"/>
    <property type="evidence" value="ECO:0000250"/>
    <property type="project" value="UniProtKB"/>
</dbReference>
<dbReference type="GO" id="GO:0030330">
    <property type="term" value="P:DNA damage response, signal transduction by p53 class mediator"/>
    <property type="evidence" value="ECO:0000250"/>
    <property type="project" value="UniProtKB"/>
</dbReference>
<dbReference type="GO" id="GO:0070365">
    <property type="term" value="P:hepatocyte differentiation"/>
    <property type="evidence" value="ECO:0000250"/>
    <property type="project" value="UniProtKB"/>
</dbReference>
<dbReference type="GO" id="GO:0032466">
    <property type="term" value="P:negative regulation of cytokinesis"/>
    <property type="evidence" value="ECO:0000250"/>
    <property type="project" value="UniProtKB"/>
</dbReference>
<dbReference type="GO" id="GO:2000134">
    <property type="term" value="P:negative regulation of G1/S transition of mitotic cell cycle"/>
    <property type="evidence" value="ECO:0000250"/>
    <property type="project" value="UniProtKB"/>
</dbReference>
<dbReference type="GO" id="GO:0000122">
    <property type="term" value="P:negative regulation of transcription by RNA polymerase II"/>
    <property type="evidence" value="ECO:0000250"/>
    <property type="project" value="UniProtKB"/>
</dbReference>
<dbReference type="GO" id="GO:0032877">
    <property type="term" value="P:positive regulation of DNA endoreduplication"/>
    <property type="evidence" value="ECO:0000250"/>
    <property type="project" value="UniProtKB"/>
</dbReference>
<dbReference type="GO" id="GO:0002040">
    <property type="term" value="P:sprouting angiogenesis"/>
    <property type="evidence" value="ECO:0000250"/>
    <property type="project" value="UniProtKB"/>
</dbReference>
<dbReference type="FunFam" id="1.10.10.10:FF:000073">
    <property type="entry name" value="E2F transcription factor 8"/>
    <property type="match status" value="1"/>
</dbReference>
<dbReference type="FunFam" id="1.10.10.10:FF:000100">
    <property type="entry name" value="E2F transcription factor 8"/>
    <property type="match status" value="1"/>
</dbReference>
<dbReference type="Gene3D" id="1.10.10.10">
    <property type="entry name" value="Winged helix-like DNA-binding domain superfamily/Winged helix DNA-binding domain"/>
    <property type="match status" value="2"/>
</dbReference>
<dbReference type="InterPro" id="IPR015633">
    <property type="entry name" value="E2F"/>
</dbReference>
<dbReference type="InterPro" id="IPR003316">
    <property type="entry name" value="E2F_WHTH_DNA-bd_dom"/>
</dbReference>
<dbReference type="InterPro" id="IPR036388">
    <property type="entry name" value="WH-like_DNA-bd_sf"/>
</dbReference>
<dbReference type="InterPro" id="IPR036390">
    <property type="entry name" value="WH_DNA-bd_sf"/>
</dbReference>
<dbReference type="PANTHER" id="PTHR12081">
    <property type="entry name" value="TRANSCRIPTION FACTOR E2F"/>
    <property type="match status" value="1"/>
</dbReference>
<dbReference type="PANTHER" id="PTHR12081:SF25">
    <property type="entry name" value="TRANSCRIPTION FACTOR E2F7"/>
    <property type="match status" value="1"/>
</dbReference>
<dbReference type="Pfam" id="PF02319">
    <property type="entry name" value="E2F_TDP"/>
    <property type="match status" value="2"/>
</dbReference>
<dbReference type="SMART" id="SM01372">
    <property type="entry name" value="E2F_TDP"/>
    <property type="match status" value="2"/>
</dbReference>
<dbReference type="SUPFAM" id="SSF46785">
    <property type="entry name" value="Winged helix' DNA-binding domain"/>
    <property type="match status" value="2"/>
</dbReference>
<proteinExistence type="inferred from homology"/>
<accession>F6YVB9</accession>
<reference key="1">
    <citation type="journal article" date="2010" name="Science">
        <title>The genome of the Western clawed frog Xenopus tropicalis.</title>
        <authorList>
            <person name="Hellsten U."/>
            <person name="Harland R.M."/>
            <person name="Gilchrist M.J."/>
            <person name="Hendrix D."/>
            <person name="Jurka J."/>
            <person name="Kapitonov V."/>
            <person name="Ovcharenko I."/>
            <person name="Putnam N.H."/>
            <person name="Shu S."/>
            <person name="Taher L."/>
            <person name="Blitz I.L."/>
            <person name="Blumberg B."/>
            <person name="Dichmann D.S."/>
            <person name="Dubchak I."/>
            <person name="Amaya E."/>
            <person name="Detter J.C."/>
            <person name="Fletcher R."/>
            <person name="Gerhard D.S."/>
            <person name="Goodstein D."/>
            <person name="Graves T."/>
            <person name="Grigoriev I.V."/>
            <person name="Grimwood J."/>
            <person name="Kawashima T."/>
            <person name="Lindquist E."/>
            <person name="Lucas S.M."/>
            <person name="Mead P.E."/>
            <person name="Mitros T."/>
            <person name="Ogino H."/>
            <person name="Ohta Y."/>
            <person name="Poliakov A.V."/>
            <person name="Pollet N."/>
            <person name="Robert J."/>
            <person name="Salamov A."/>
            <person name="Sater A.K."/>
            <person name="Schmutz J."/>
            <person name="Terry A."/>
            <person name="Vize P.D."/>
            <person name="Warren W.C."/>
            <person name="Wells D."/>
            <person name="Wills A."/>
            <person name="Wilson R.K."/>
            <person name="Zimmerman L.B."/>
            <person name="Zorn A.M."/>
            <person name="Grainger R."/>
            <person name="Grammer T."/>
            <person name="Khokha M.K."/>
            <person name="Richardson P.M."/>
            <person name="Rokhsar D.S."/>
        </authorList>
    </citation>
    <scope>NUCLEOTIDE SEQUENCE [LARGE SCALE GENOMIC DNA]</scope>
</reference>
<protein>
    <recommendedName>
        <fullName>Transcription factor E2F7</fullName>
        <shortName>E2F-7</shortName>
    </recommendedName>
</protein>
<name>E2F7_XENTR</name>
<feature type="chain" id="PRO_0000420707" description="Transcription factor E2F7">
    <location>
        <begin position="1"/>
        <end position="862"/>
    </location>
</feature>
<feature type="DNA-binding region" evidence="2">
    <location>
        <begin position="140"/>
        <end position="209"/>
    </location>
</feature>
<feature type="DNA-binding region" evidence="2">
    <location>
        <begin position="279"/>
        <end position="364"/>
    </location>
</feature>
<feature type="region of interest" description="Disordered" evidence="3">
    <location>
        <begin position="561"/>
        <end position="592"/>
    </location>
</feature>
<feature type="region of interest" description="Disordered" evidence="3">
    <location>
        <begin position="617"/>
        <end position="643"/>
    </location>
</feature>
<feature type="region of interest" description="Disordered" evidence="3">
    <location>
        <begin position="788"/>
        <end position="862"/>
    </location>
</feature>
<feature type="compositionally biased region" description="Polar residues" evidence="3">
    <location>
        <begin position="564"/>
        <end position="574"/>
    </location>
</feature>
<feature type="compositionally biased region" description="Basic and acidic residues" evidence="3">
    <location>
        <begin position="575"/>
        <end position="590"/>
    </location>
</feature>
<feature type="compositionally biased region" description="Polar residues" evidence="3">
    <location>
        <begin position="633"/>
        <end position="643"/>
    </location>
</feature>
<feature type="compositionally biased region" description="Polar residues" evidence="3">
    <location>
        <begin position="832"/>
        <end position="851"/>
    </location>
</feature>